<reference key="1">
    <citation type="journal article" date="1995" name="Genes Dev.">
        <title>SMC2, a Saccharomyces cerevisiae gene essential for chromosome segregation and condensation, defines a subgroup within the SMC family.</title>
        <authorList>
            <person name="Strunnikov A.V."/>
            <person name="Hogan E."/>
            <person name="Koshland D."/>
        </authorList>
    </citation>
    <scope>NUCLEOTIDE SEQUENCE [GENOMIC DNA]</scope>
</reference>
<reference key="2">
    <citation type="journal article" date="1995" name="Nat. Genet.">
        <title>Analysis of the nucleotide sequence of chromosome VI from Saccharomyces cerevisiae.</title>
        <authorList>
            <person name="Murakami Y."/>
            <person name="Naitou M."/>
            <person name="Hagiwara H."/>
            <person name="Shibata T."/>
            <person name="Ozawa M."/>
            <person name="Sasanuma S."/>
            <person name="Sasanuma M."/>
            <person name="Tsuchiya Y."/>
            <person name="Soeda E."/>
            <person name="Yokoyama K."/>
            <person name="Yamazaki M."/>
            <person name="Tashiro H."/>
            <person name="Eki T."/>
        </authorList>
    </citation>
    <scope>NUCLEOTIDE SEQUENCE [LARGE SCALE GENOMIC DNA]</scope>
    <source>
        <strain>ATCC 204508 / S288c</strain>
    </source>
</reference>
<reference key="3">
    <citation type="journal article" date="2014" name="G3 (Bethesda)">
        <title>The reference genome sequence of Saccharomyces cerevisiae: Then and now.</title>
        <authorList>
            <person name="Engel S.R."/>
            <person name="Dietrich F.S."/>
            <person name="Fisk D.G."/>
            <person name="Binkley G."/>
            <person name="Balakrishnan R."/>
            <person name="Costanzo M.C."/>
            <person name="Dwight S.S."/>
            <person name="Hitz B.C."/>
            <person name="Karra K."/>
            <person name="Nash R.S."/>
            <person name="Weng S."/>
            <person name="Wong E.D."/>
            <person name="Lloyd P."/>
            <person name="Skrzypek M.S."/>
            <person name="Miyasato S.R."/>
            <person name="Simison M."/>
            <person name="Cherry J.M."/>
        </authorList>
    </citation>
    <scope>GENOME REANNOTATION</scope>
    <source>
        <strain>ATCC 204508 / S288c</strain>
    </source>
</reference>
<reference key="4">
    <citation type="journal article" date="1996" name="Yeast">
        <title>Fifteen open reading frames in a 30.8 kb region of the right arm of chromosome VI from Saccharomyces cerevisiae.</title>
        <authorList>
            <person name="Eki T."/>
            <person name="Naitou M."/>
            <person name="Hagiwara H."/>
            <person name="Abe M."/>
            <person name="Ozawa M."/>
            <person name="Sasanuma S."/>
            <person name="Sasanuma M."/>
            <person name="Tsuchiya Y."/>
            <person name="Shibata T."/>
            <person name="Watanabe K."/>
            <person name="Ono A."/>
            <person name="Yamazaki M."/>
            <person name="Tashiro H."/>
            <person name="Hanaoka F."/>
            <person name="Murakami Y."/>
        </authorList>
    </citation>
    <scope>NUCLEOTIDE SEQUENCE [GENOMIC DNA]</scope>
    <source>
        <strain>ATCC 204511 / S288c / AB972</strain>
    </source>
</reference>
<reference key="5">
    <citation type="journal article" date="2000" name="J. Cell Biol.">
        <title>The condensin complex governs chromosome condensation and mitotic transmission of rDNA.</title>
        <authorList>
            <person name="Freeman L."/>
            <person name="Aragon-Alcaide L."/>
            <person name="Strunnikov A.V."/>
        </authorList>
    </citation>
    <scope>IDENTIFICATION IN A CONDENSIN COMPLEX WITH SMC4; BRN1; YCS4 AND YCG1</scope>
</reference>
<reference key="6">
    <citation type="journal article" date="2003" name="Nature">
        <title>Global analysis of protein expression in yeast.</title>
        <authorList>
            <person name="Ghaemmaghami S."/>
            <person name="Huh W.-K."/>
            <person name="Bower K."/>
            <person name="Howson R.W."/>
            <person name="Belle A."/>
            <person name="Dephoure N."/>
            <person name="O'Shea E.K."/>
            <person name="Weissman J.S."/>
        </authorList>
    </citation>
    <scope>LEVEL OF PROTEIN EXPRESSION [LARGE SCALE ANALYSIS]</scope>
</reference>
<name>SMC2_YEAST</name>
<feature type="chain" id="PRO_0000119013" description="Structural maintenance of chromosomes protein 2">
    <location>
        <begin position="1"/>
        <end position="1170"/>
    </location>
</feature>
<feature type="domain" description="SMC hinge">
    <location>
        <begin position="523"/>
        <end position="641"/>
    </location>
</feature>
<feature type="coiled-coil region" evidence="2">
    <location>
        <begin position="172"/>
        <end position="469"/>
    </location>
</feature>
<feature type="coiled-coil region" evidence="2">
    <location>
        <begin position="678"/>
        <end position="1027"/>
    </location>
</feature>
<feature type="binding site" evidence="2">
    <location>
        <begin position="32"/>
        <end position="39"/>
    </location>
    <ligand>
        <name>ATP</name>
        <dbReference type="ChEBI" id="CHEBI:30616"/>
    </ligand>
</feature>
<feature type="strand" evidence="7">
    <location>
        <begin position="2"/>
        <end position="11"/>
    </location>
</feature>
<feature type="strand" evidence="7">
    <location>
        <begin position="14"/>
        <end position="20"/>
    </location>
</feature>
<feature type="strand" evidence="7">
    <location>
        <begin position="28"/>
        <end position="33"/>
    </location>
</feature>
<feature type="helix" evidence="7">
    <location>
        <begin position="38"/>
        <end position="48"/>
    </location>
</feature>
<feature type="helix" evidence="7">
    <location>
        <begin position="54"/>
        <end position="57"/>
    </location>
</feature>
<feature type="helix" evidence="7">
    <location>
        <begin position="62"/>
        <end position="65"/>
    </location>
</feature>
<feature type="strand" evidence="7">
    <location>
        <begin position="66"/>
        <end position="70"/>
    </location>
</feature>
<feature type="strand" evidence="8">
    <location>
        <begin position="71"/>
        <end position="73"/>
    </location>
</feature>
<feature type="strand" evidence="7">
    <location>
        <begin position="77"/>
        <end position="84"/>
    </location>
</feature>
<feature type="strand" evidence="7">
    <location>
        <begin position="96"/>
        <end position="98"/>
    </location>
</feature>
<feature type="strand" evidence="7">
    <location>
        <begin position="102"/>
        <end position="107"/>
    </location>
</feature>
<feature type="strand" evidence="7">
    <location>
        <begin position="109"/>
        <end position="111"/>
    </location>
</feature>
<feature type="strand" evidence="7">
    <location>
        <begin position="114"/>
        <end position="117"/>
    </location>
</feature>
<feature type="strand" evidence="7">
    <location>
        <begin position="120"/>
        <end position="122"/>
    </location>
</feature>
<feature type="helix" evidence="7">
    <location>
        <begin position="124"/>
        <end position="132"/>
    </location>
</feature>
<feature type="turn" evidence="7">
    <location>
        <begin position="133"/>
        <end position="135"/>
    </location>
</feature>
<feature type="strand" evidence="7">
    <location>
        <begin position="138"/>
        <end position="140"/>
    </location>
</feature>
<feature type="strand" evidence="7">
    <location>
        <begin position="142"/>
        <end position="145"/>
    </location>
</feature>
<feature type="helix" evidence="7">
    <location>
        <begin position="153"/>
        <end position="155"/>
    </location>
</feature>
<feature type="helix" evidence="7">
    <location>
        <begin position="158"/>
        <end position="168"/>
    </location>
</feature>
<feature type="helix" evidence="7">
    <location>
        <begin position="175"/>
        <end position="227"/>
    </location>
</feature>
<feature type="helix" evidence="6">
    <location>
        <begin position="455"/>
        <end position="469"/>
    </location>
</feature>
<feature type="helix" evidence="6">
    <location>
        <begin position="473"/>
        <end position="495"/>
    </location>
</feature>
<feature type="helix" evidence="6">
    <location>
        <begin position="498"/>
        <end position="501"/>
    </location>
</feature>
<feature type="strand" evidence="6">
    <location>
        <begin position="523"/>
        <end position="526"/>
    </location>
</feature>
<feature type="helix" evidence="6">
    <location>
        <begin position="527"/>
        <end position="529"/>
    </location>
</feature>
<feature type="helix" evidence="6">
    <location>
        <begin position="536"/>
        <end position="540"/>
    </location>
</feature>
<feature type="helix" evidence="6">
    <location>
        <begin position="541"/>
        <end position="548"/>
    </location>
</feature>
<feature type="helix" evidence="6">
    <location>
        <begin position="549"/>
        <end position="553"/>
    </location>
</feature>
<feature type="strand" evidence="6">
    <location>
        <begin position="555"/>
        <end position="559"/>
    </location>
</feature>
<feature type="helix" evidence="6">
    <location>
        <begin position="560"/>
        <end position="568"/>
    </location>
</feature>
<feature type="strand" evidence="6">
    <location>
        <begin position="576"/>
        <end position="580"/>
    </location>
</feature>
<feature type="turn" evidence="6">
    <location>
        <begin position="581"/>
        <end position="583"/>
    </location>
</feature>
<feature type="helix" evidence="6">
    <location>
        <begin position="591"/>
        <end position="600"/>
    </location>
</feature>
<feature type="strand" evidence="6">
    <location>
        <begin position="604"/>
        <end position="607"/>
    </location>
</feature>
<feature type="helix" evidence="6">
    <location>
        <begin position="608"/>
        <end position="611"/>
    </location>
</feature>
<feature type="helix" evidence="6">
    <location>
        <begin position="616"/>
        <end position="618"/>
    </location>
</feature>
<feature type="helix" evidence="6">
    <location>
        <begin position="619"/>
        <end position="626"/>
    </location>
</feature>
<feature type="strand" evidence="6">
    <location>
        <begin position="629"/>
        <end position="634"/>
    </location>
</feature>
<feature type="helix" evidence="6">
    <location>
        <begin position="635"/>
        <end position="642"/>
    </location>
</feature>
<feature type="strand" evidence="6">
    <location>
        <begin position="650"/>
        <end position="653"/>
    </location>
</feature>
<feature type="turn" evidence="6">
    <location>
        <begin position="654"/>
        <end position="656"/>
    </location>
</feature>
<feature type="strand" evidence="6">
    <location>
        <begin position="657"/>
        <end position="660"/>
    </location>
</feature>
<feature type="turn" evidence="6">
    <location>
        <begin position="661"/>
        <end position="663"/>
    </location>
</feature>
<feature type="strand" evidence="6">
    <location>
        <begin position="664"/>
        <end position="668"/>
    </location>
</feature>
<feature type="helix" evidence="6">
    <location>
        <begin position="676"/>
        <end position="705"/>
    </location>
</feature>
<feature type="turn" evidence="6">
    <location>
        <begin position="706"/>
        <end position="711"/>
    </location>
</feature>
<feature type="helix" evidence="6">
    <location>
        <begin position="714"/>
        <end position="721"/>
    </location>
</feature>
<feature type="turn" evidence="6">
    <location>
        <begin position="722"/>
        <end position="726"/>
    </location>
</feature>
<feature type="helix" evidence="6">
    <location>
        <begin position="727"/>
        <end position="734"/>
    </location>
</feature>
<feature type="helix" evidence="9">
    <location>
        <begin position="948"/>
        <end position="951"/>
    </location>
</feature>
<feature type="turn" evidence="9">
    <location>
        <begin position="952"/>
        <end position="955"/>
    </location>
</feature>
<feature type="helix" evidence="7">
    <location>
        <begin position="969"/>
        <end position="977"/>
    </location>
</feature>
<feature type="turn" evidence="8">
    <location>
        <begin position="978"/>
        <end position="980"/>
    </location>
</feature>
<feature type="helix" evidence="7">
    <location>
        <begin position="986"/>
        <end position="1047"/>
    </location>
</feature>
<feature type="strand" evidence="7">
    <location>
        <begin position="1051"/>
        <end position="1058"/>
    </location>
</feature>
<feature type="strand" evidence="8">
    <location>
        <begin position="1059"/>
        <end position="1061"/>
    </location>
</feature>
<feature type="helix" evidence="7">
    <location>
        <begin position="1063"/>
        <end position="1065"/>
    </location>
</feature>
<feature type="strand" evidence="7">
    <location>
        <begin position="1067"/>
        <end position="1073"/>
    </location>
</feature>
<feature type="strand" evidence="8">
    <location>
        <begin position="1076"/>
        <end position="1079"/>
    </location>
</feature>
<feature type="helix" evidence="9">
    <location>
        <begin position="1081"/>
        <end position="1083"/>
    </location>
</feature>
<feature type="helix" evidence="7">
    <location>
        <begin position="1086"/>
        <end position="1103"/>
    </location>
</feature>
<feature type="strand" evidence="7">
    <location>
        <begin position="1107"/>
        <end position="1113"/>
    </location>
</feature>
<feature type="turn" evidence="7">
    <location>
        <begin position="1114"/>
        <end position="1117"/>
    </location>
</feature>
<feature type="helix" evidence="7">
    <location>
        <begin position="1120"/>
        <end position="1131"/>
    </location>
</feature>
<feature type="turn" evidence="7">
    <location>
        <begin position="1132"/>
        <end position="1134"/>
    </location>
</feature>
<feature type="strand" evidence="7">
    <location>
        <begin position="1136"/>
        <end position="1142"/>
    </location>
</feature>
<feature type="helix" evidence="7">
    <location>
        <begin position="1146"/>
        <end position="1149"/>
    </location>
</feature>
<feature type="strand" evidence="7">
    <location>
        <begin position="1153"/>
        <end position="1169"/>
    </location>
</feature>
<keyword id="KW-0002">3D-structure</keyword>
<keyword id="KW-0067">ATP-binding</keyword>
<keyword id="KW-0131">Cell cycle</keyword>
<keyword id="KW-0132">Cell division</keyword>
<keyword id="KW-0158">Chromosome</keyword>
<keyword id="KW-0175">Coiled coil</keyword>
<keyword id="KW-0963">Cytoplasm</keyword>
<keyword id="KW-0226">DNA condensation</keyword>
<keyword id="KW-0498">Mitosis</keyword>
<keyword id="KW-0547">Nucleotide-binding</keyword>
<keyword id="KW-0539">Nucleus</keyword>
<keyword id="KW-1185">Reference proteome</keyword>
<dbReference type="EMBL" id="U05820">
    <property type="protein sequence ID" value="AAA17416.1"/>
    <property type="molecule type" value="Genomic_DNA"/>
</dbReference>
<dbReference type="EMBL" id="D50617">
    <property type="protein sequence ID" value="BAA09270.1"/>
    <property type="molecule type" value="Genomic_DNA"/>
</dbReference>
<dbReference type="EMBL" id="BK006940">
    <property type="protein sequence ID" value="DAA12471.1"/>
    <property type="molecule type" value="Genomic_DNA"/>
</dbReference>
<dbReference type="PIR" id="A56157">
    <property type="entry name" value="A56157"/>
</dbReference>
<dbReference type="RefSeq" id="NP_116687.1">
    <property type="nucleotide sequence ID" value="NM_001179996.2"/>
</dbReference>
<dbReference type="PDB" id="4RSI">
    <property type="method" value="X-ray"/>
    <property type="resolution" value="2.90 A"/>
    <property type="chains" value="A=396-792"/>
</dbReference>
<dbReference type="PDB" id="6YVD">
    <property type="method" value="EM"/>
    <property type="resolution" value="7.60 A"/>
    <property type="chains" value="C=1-1170"/>
</dbReference>
<dbReference type="PDB" id="6YVU">
    <property type="method" value="EM"/>
    <property type="resolution" value="7.50 A"/>
    <property type="chains" value="A=1-1170"/>
</dbReference>
<dbReference type="PDB" id="6YVV">
    <property type="method" value="EM"/>
    <property type="resolution" value="7.50 A"/>
    <property type="chains" value="A=1-1170"/>
</dbReference>
<dbReference type="PDB" id="7Q2X">
    <property type="method" value="EM"/>
    <property type="resolution" value="3.00 A"/>
    <property type="chains" value="A=1-1170"/>
</dbReference>
<dbReference type="PDB" id="7Q2Y">
    <property type="method" value="EM"/>
    <property type="chains" value="A=1-1170"/>
</dbReference>
<dbReference type="PDB" id="7QEN">
    <property type="method" value="EM"/>
    <property type="resolution" value="3.46 A"/>
    <property type="chains" value="A=1-1170"/>
</dbReference>
<dbReference type="PDBsum" id="4RSI"/>
<dbReference type="PDBsum" id="6YVD"/>
<dbReference type="PDBsum" id="6YVU"/>
<dbReference type="PDBsum" id="6YVV"/>
<dbReference type="PDBsum" id="7Q2X"/>
<dbReference type="PDBsum" id="7Q2Y"/>
<dbReference type="PDBsum" id="7QEN"/>
<dbReference type="EMDB" id="EMD-10944"/>
<dbReference type="EMDB" id="EMD-10951"/>
<dbReference type="EMDB" id="EMD-10952"/>
<dbReference type="EMDB" id="EMD-13783"/>
<dbReference type="EMDB" id="EMD-13784"/>
<dbReference type="EMDB" id="EMD-13934"/>
<dbReference type="SMR" id="P38989"/>
<dbReference type="BioGRID" id="31186">
    <property type="interactions" value="113"/>
</dbReference>
<dbReference type="ComplexPortal" id="CPX-1869">
    <property type="entry name" value="Nuclear condensin complex"/>
</dbReference>
<dbReference type="DIP" id="DIP-2983N"/>
<dbReference type="FunCoup" id="P38989">
    <property type="interactions" value="1338"/>
</dbReference>
<dbReference type="IntAct" id="P38989">
    <property type="interactions" value="15"/>
</dbReference>
<dbReference type="MINT" id="P38989"/>
<dbReference type="STRING" id="4932.YFR031C"/>
<dbReference type="iPTMnet" id="P38989"/>
<dbReference type="PaxDb" id="4932-YFR031C"/>
<dbReference type="PeptideAtlas" id="P38989"/>
<dbReference type="EnsemblFungi" id="YFR031C_mRNA">
    <property type="protein sequence ID" value="YFR031C"/>
    <property type="gene ID" value="YFR031C"/>
</dbReference>
<dbReference type="GeneID" id="850589"/>
<dbReference type="KEGG" id="sce:YFR031C"/>
<dbReference type="AGR" id="SGD:S000001927"/>
<dbReference type="SGD" id="S000001927">
    <property type="gene designation" value="SMC2"/>
</dbReference>
<dbReference type="VEuPathDB" id="FungiDB:YFR031C"/>
<dbReference type="eggNOG" id="KOG0933">
    <property type="taxonomic scope" value="Eukaryota"/>
</dbReference>
<dbReference type="GeneTree" id="ENSGT00550000074857"/>
<dbReference type="HOGENOM" id="CLU_001042_9_0_1"/>
<dbReference type="InParanoid" id="P38989"/>
<dbReference type="OMA" id="THNKIAM"/>
<dbReference type="OrthoDB" id="10255539at2759"/>
<dbReference type="BioCyc" id="YEAST:G3O-30479-MONOMER"/>
<dbReference type="Reactome" id="R-SCE-2514853">
    <property type="pathway name" value="Condensation of Prometaphase Chromosomes"/>
</dbReference>
<dbReference type="BioGRID-ORCS" id="850589">
    <property type="hits" value="2 hits in 10 CRISPR screens"/>
</dbReference>
<dbReference type="EvolutionaryTrace" id="P38989"/>
<dbReference type="PRO" id="PR:P38989"/>
<dbReference type="Proteomes" id="UP000002311">
    <property type="component" value="Chromosome VI"/>
</dbReference>
<dbReference type="RNAct" id="P38989">
    <property type="molecule type" value="protein"/>
</dbReference>
<dbReference type="GO" id="GO:0000785">
    <property type="term" value="C:chromatin"/>
    <property type="evidence" value="ECO:0000318"/>
    <property type="project" value="GO_Central"/>
</dbReference>
<dbReference type="GO" id="GO:0000793">
    <property type="term" value="C:condensed chromosome"/>
    <property type="evidence" value="ECO:0000318"/>
    <property type="project" value="GO_Central"/>
</dbReference>
<dbReference type="GO" id="GO:0000796">
    <property type="term" value="C:condensin complex"/>
    <property type="evidence" value="ECO:0000314"/>
    <property type="project" value="SGD"/>
</dbReference>
<dbReference type="GO" id="GO:0005739">
    <property type="term" value="C:mitochondrion"/>
    <property type="evidence" value="ECO:0007005"/>
    <property type="project" value="SGD"/>
</dbReference>
<dbReference type="GO" id="GO:0005634">
    <property type="term" value="C:nucleus"/>
    <property type="evidence" value="ECO:0007669"/>
    <property type="project" value="UniProtKB-SubCell"/>
</dbReference>
<dbReference type="GO" id="GO:0005524">
    <property type="term" value="F:ATP binding"/>
    <property type="evidence" value="ECO:0000314"/>
    <property type="project" value="SGD"/>
</dbReference>
<dbReference type="GO" id="GO:0016887">
    <property type="term" value="F:ATP hydrolysis activity"/>
    <property type="evidence" value="ECO:0007669"/>
    <property type="project" value="InterPro"/>
</dbReference>
<dbReference type="GO" id="GO:0003682">
    <property type="term" value="F:chromatin binding"/>
    <property type="evidence" value="ECO:0000314"/>
    <property type="project" value="SGD"/>
</dbReference>
<dbReference type="GO" id="GO:0000217">
    <property type="term" value="F:DNA secondary structure binding"/>
    <property type="evidence" value="ECO:0000314"/>
    <property type="project" value="SGD"/>
</dbReference>
<dbReference type="GO" id="GO:0003690">
    <property type="term" value="F:double-stranded DNA binding"/>
    <property type="evidence" value="ECO:0000314"/>
    <property type="project" value="SGD"/>
</dbReference>
<dbReference type="GO" id="GO:0003680">
    <property type="term" value="F:minor groove of adenine-thymine-rich DNA binding"/>
    <property type="evidence" value="ECO:0000314"/>
    <property type="project" value="SGD"/>
</dbReference>
<dbReference type="GO" id="GO:0051301">
    <property type="term" value="P:cell division"/>
    <property type="evidence" value="ECO:0007669"/>
    <property type="project" value="UniProtKB-KW"/>
</dbReference>
<dbReference type="GO" id="GO:0030261">
    <property type="term" value="P:chromosome condensation"/>
    <property type="evidence" value="ECO:0000303"/>
    <property type="project" value="ComplexPortal"/>
</dbReference>
<dbReference type="GO" id="GO:0007076">
    <property type="term" value="P:mitotic chromosome condensation"/>
    <property type="evidence" value="ECO:0000315"/>
    <property type="project" value="SGD"/>
</dbReference>
<dbReference type="GO" id="GO:0000070">
    <property type="term" value="P:mitotic sister chromatid segregation"/>
    <property type="evidence" value="ECO:0000315"/>
    <property type="project" value="SGD"/>
</dbReference>
<dbReference type="GO" id="GO:1903342">
    <property type="term" value="P:negative regulation of meiotic DNA double-strand break formation"/>
    <property type="evidence" value="ECO:0000315"/>
    <property type="project" value="SGD"/>
</dbReference>
<dbReference type="GO" id="GO:0070550">
    <property type="term" value="P:rDNA chromatin condensation"/>
    <property type="evidence" value="ECO:0000315"/>
    <property type="project" value="SGD"/>
</dbReference>
<dbReference type="GO" id="GO:0070058">
    <property type="term" value="P:tRNA gene clustering"/>
    <property type="evidence" value="ECO:0000315"/>
    <property type="project" value="SGD"/>
</dbReference>
<dbReference type="CDD" id="cd03273">
    <property type="entry name" value="ABC_SMC2_euk"/>
    <property type="match status" value="1"/>
</dbReference>
<dbReference type="FunFam" id="3.40.50.300:FF:000278">
    <property type="entry name" value="Structural maintenance of chromosomes 2"/>
    <property type="match status" value="1"/>
</dbReference>
<dbReference type="FunFam" id="3.40.50.300:FF:000385">
    <property type="entry name" value="Structural maintenance of chromosomes 2"/>
    <property type="match status" value="1"/>
</dbReference>
<dbReference type="FunFam" id="3.30.70.1620:FF:000006">
    <property type="entry name" value="Structural maintenance of chromosomes protein"/>
    <property type="match status" value="1"/>
</dbReference>
<dbReference type="Gene3D" id="1.20.1060.20">
    <property type="match status" value="1"/>
</dbReference>
<dbReference type="Gene3D" id="3.30.70.1620">
    <property type="match status" value="1"/>
</dbReference>
<dbReference type="Gene3D" id="3.40.50.300">
    <property type="entry name" value="P-loop containing nucleotide triphosphate hydrolases"/>
    <property type="match status" value="2"/>
</dbReference>
<dbReference type="InterPro" id="IPR027417">
    <property type="entry name" value="P-loop_NTPase"/>
</dbReference>
<dbReference type="InterPro" id="IPR003395">
    <property type="entry name" value="RecF/RecN/SMC_N"/>
</dbReference>
<dbReference type="InterPro" id="IPR024704">
    <property type="entry name" value="SMC"/>
</dbReference>
<dbReference type="InterPro" id="IPR027120">
    <property type="entry name" value="Smc2_ABC"/>
</dbReference>
<dbReference type="InterPro" id="IPR010935">
    <property type="entry name" value="SMC_hinge"/>
</dbReference>
<dbReference type="InterPro" id="IPR036277">
    <property type="entry name" value="SMC_hinge_sf"/>
</dbReference>
<dbReference type="PANTHER" id="PTHR43977">
    <property type="entry name" value="STRUCTURAL MAINTENANCE OF CHROMOSOMES PROTEIN 3"/>
    <property type="match status" value="1"/>
</dbReference>
<dbReference type="Pfam" id="PF06470">
    <property type="entry name" value="SMC_hinge"/>
    <property type="match status" value="1"/>
</dbReference>
<dbReference type="Pfam" id="PF02463">
    <property type="entry name" value="SMC_N"/>
    <property type="match status" value="2"/>
</dbReference>
<dbReference type="PIRSF" id="PIRSF005719">
    <property type="entry name" value="SMC"/>
    <property type="match status" value="1"/>
</dbReference>
<dbReference type="SMART" id="SM00968">
    <property type="entry name" value="SMC_hinge"/>
    <property type="match status" value="1"/>
</dbReference>
<dbReference type="SUPFAM" id="SSF52540">
    <property type="entry name" value="P-loop containing nucleoside triphosphate hydrolases"/>
    <property type="match status" value="1"/>
</dbReference>
<dbReference type="SUPFAM" id="SSF75553">
    <property type="entry name" value="Smc hinge domain"/>
    <property type="match status" value="1"/>
</dbReference>
<proteinExistence type="evidence at protein level"/>
<comment type="function">
    <text>Central component of the condensin complex, a complex required for conversion of interphase chromatin into mitotic-like condense chromosomes. The condensin complex probably introduces positive supercoils into relaxed DNA in the presence of type I topoisomerases and converts nicked DNA into positive knotted forms in the presence of type II topoisomerases.</text>
</comment>
<comment type="subunit">
    <text evidence="3">Forms a heterodimer with SMC4. Component of the condensin complex, which contains the SMC2 and SMC4 heterodimer, and three non SMC subunits that probably regulate the complex: BRN1, YCS4 and YCG1/YCS5.</text>
</comment>
<comment type="interaction">
    <interactant intactId="EBI-17412">
        <id>P38989</id>
    </interactant>
    <interactant intactId="EBI-4792">
        <id>P38170</id>
        <label>BRN1</label>
    </interactant>
    <organismsDiffer>false</organismsDiffer>
    <experiments>3</experiments>
</comment>
<comment type="interaction">
    <interactant intactId="EBI-17412">
        <id>P38989</id>
    </interactant>
    <interactant intactId="EBI-17402">
        <id>P32908</id>
        <label>SMC1</label>
    </interactant>
    <organismsDiffer>false</organismsDiffer>
    <experiments>3</experiments>
</comment>
<comment type="interaction">
    <interactant intactId="EBI-17412">
        <id>P38989</id>
    </interactant>
    <interactant intactId="EBI-17430">
        <id>Q12267</id>
        <label>SMC4</label>
    </interactant>
    <organismsDiffer>false</organismsDiffer>
    <experiments>2</experiments>
</comment>
<comment type="interaction">
    <interactant intactId="EBI-17412">
        <id>P38989</id>
    </interactant>
    <interactant intactId="EBI-4799">
        <id>Q06680</id>
        <label>YCG1</label>
    </interactant>
    <organismsDiffer>false</organismsDiffer>
    <experiments>4</experiments>
</comment>
<comment type="interaction">
    <interactant intactId="EBI-17412">
        <id>P38989</id>
    </interactant>
    <interactant intactId="EBI-4785">
        <id>Q06156</id>
        <label>YCS4</label>
    </interactant>
    <organismsDiffer>false</organismsDiffer>
    <experiments>2</experiments>
</comment>
<comment type="subcellular location">
    <subcellularLocation>
        <location>Nucleus</location>
    </subcellularLocation>
    <subcellularLocation>
        <location>Cytoplasm</location>
    </subcellularLocation>
    <subcellularLocation>
        <location>Chromosome</location>
    </subcellularLocation>
    <text>In interphase cells, the majority of the condensin complex is found in the cytoplasm, while a minority of the complex is associated with chromatin. A subpopulation of the complex however remains associated with chromosome foci in interphase cells. During mitosis, most of the condensin complex is associated with the chromatin. At the onset of prophase, condensin associates with chromosome arms and to chromosome condensation. Dissociation from chromosomes is observed in late telophase.</text>
</comment>
<comment type="domain">
    <text evidence="1">The flexible SMC hinge domain, which separates the large intramolecular coiled coil regions, allows the heterodimerization with SMC4, forming a V-shaped heterodimer.</text>
</comment>
<comment type="miscellaneous">
    <text evidence="4">Present with 3290 molecules/cell in log phase SD medium.</text>
</comment>
<comment type="similarity">
    <text evidence="5">Belongs to the SMC family. SMC2 subfamily.</text>
</comment>
<protein>
    <recommendedName>
        <fullName>Structural maintenance of chromosomes protein 2</fullName>
    </recommendedName>
    <alternativeName>
        <fullName>DA-box protein SMC2</fullName>
    </alternativeName>
</protein>
<organism>
    <name type="scientific">Saccharomyces cerevisiae (strain ATCC 204508 / S288c)</name>
    <name type="common">Baker's yeast</name>
    <dbReference type="NCBI Taxonomy" id="559292"/>
    <lineage>
        <taxon>Eukaryota</taxon>
        <taxon>Fungi</taxon>
        <taxon>Dikarya</taxon>
        <taxon>Ascomycota</taxon>
        <taxon>Saccharomycotina</taxon>
        <taxon>Saccharomycetes</taxon>
        <taxon>Saccharomycetales</taxon>
        <taxon>Saccharomycetaceae</taxon>
        <taxon>Saccharomyces</taxon>
    </lineage>
</organism>
<sequence>MKVEELIIDGFKSYATRTVITDWDPQFNAITGLNGSGKSNILDAICFVLGIASMSTVRASSLQDLIYKRGQAGVTKASVTIVFDNTDKSNSPIGFTNSPQISVTRQVVLGGTSKYLINGHRAPQQSVLQLFQSVQLNINNPNFLIMQGKITKVLNMKPSEILSLIEEAAGTKMFEDRREKAERTMSKKETKLQENRTLLTEEIEPKLEKLRNEKRMFLEFQSTQTDLEKTERIVVSYEYYNIKHKHTSIRETLENGETRMKMLNEFVKKTSEEIDSLNEDVEEIKLQKEKELHKEGTISKLENKENGLLNEISRLKTSLSIKVENLNDTTEKSKALESEIASSSAKLIEKKSAYANTEKDYKMVQEQLSKQRDLYKRKEELVSTLTTGISSTGAADGGYNAQLAKAKTELNEVSLAIKKSSMKMELLKKELLTIEPKLKEATKDNELNVKHVKQCQETCDKLRARLVEYGFDPSRIKDLKQREDKLKSHYYQTCKNSEYLKRRVTNLEFNYTKPYPNFEASFVHGVVGQLFQIDNDNIRYATALQTCAGGRLFNVVVQDSQTATQLLERGRLRKRVTIIPLDKIYTRPISSQVLDLAKKIAPGKVELAINLIRFDESITKAMEFIFGNSLICEDPETAKKITFHPKIRARSITLQGDVYDPEGTLSGGSRNTSESLLVDIQKYNQIQKQIETIQADLNHVTEELQTQYATSQKTKTIQSDLNLSLHKLDLAKRNLDANPSSQIIARNEEILRDIGECENEIKTKQMSLKKCQEEVSTIEKDMKEYDSDKGSKLNELKKELKLLAKELEEQESESERKYDLFQNLELETEQLSSELDSNKTLLHNHLKSIESLKLENSDLEGKIRGVEDDLVTVQTELNEEKKRLMDIDDELNELETLIKKKQDEKKSSELELQKLVHDLNKYKSNTNNMEKIIEDLRQKHEFLEDFDLVRNIVKQNEGIDLDTYRERSKQLNEKFQELRKKVNPNIMNMIENVEKKEAALKTMIKTIEKDKMKIQETISKLNEYKRETLVKTWEKVTLDFGNIFADLLPNSFAKLVPCEGKDVTQGLEVKVKLGNIWKESLIELSGGQRSLIALSLIMALLQFRPAPMYILDEVDAALDLSHTQNIGHLIKTRFKGSQFIVVSLKEGMFANANRVFRTRFQDGTSVVSIM</sequence>
<evidence type="ECO:0000250" key="1"/>
<evidence type="ECO:0000255" key="2"/>
<evidence type="ECO:0000269" key="3">
    <source>
    </source>
</evidence>
<evidence type="ECO:0000269" key="4">
    <source>
    </source>
</evidence>
<evidence type="ECO:0000305" key="5"/>
<evidence type="ECO:0007829" key="6">
    <source>
        <dbReference type="PDB" id="4RSI"/>
    </source>
</evidence>
<evidence type="ECO:0007829" key="7">
    <source>
        <dbReference type="PDB" id="7Q2X"/>
    </source>
</evidence>
<evidence type="ECO:0007829" key="8">
    <source>
        <dbReference type="PDB" id="7Q2Y"/>
    </source>
</evidence>
<evidence type="ECO:0007829" key="9">
    <source>
        <dbReference type="PDB" id="7QEN"/>
    </source>
</evidence>
<accession>P38989</accession>
<accession>D6VTR1</accession>
<gene>
    <name type="primary">SMC2</name>
    <name type="ordered locus">YFR031C</name>
</gene>